<keyword id="KW-0025">Alternative splicing</keyword>
<keyword id="KW-0963">Cytoplasm</keyword>
<keyword id="KW-0274">FAD</keyword>
<keyword id="KW-0285">Flavoprotein</keyword>
<keyword id="KW-0560">Oxidoreductase</keyword>
<keyword id="KW-0576">Peroxisome</keyword>
<keyword id="KW-1185">Reference proteome</keyword>
<protein>
    <recommendedName>
        <fullName>D-aspartate oxidase</fullName>
        <shortName>DASOX</shortName>
        <shortName evidence="30">DASPO</shortName>
        <shortName evidence="31">DDO</shortName>
        <ecNumber evidence="4 7 8 11 12 14 21">1.4.3.1</ecNumber>
    </recommendedName>
</protein>
<proteinExistence type="evidence at protein level"/>
<accession>Q922Z0</accession>
<accession>Q0E9Q7</accession>
<accession>Q2UVA9</accession>
<accession>Q3TT69</accession>
<accession>Q8R2R2</accession>
<dbReference type="EC" id="1.4.3.1" evidence="4 7 8 11 12 14 21"/>
<dbReference type="EMBL" id="AM180091">
    <property type="protein sequence ID" value="CAJ55686.1"/>
    <property type="molecule type" value="mRNA"/>
</dbReference>
<dbReference type="EMBL" id="AB274968">
    <property type="protein sequence ID" value="BAF32940.1"/>
    <property type="molecule type" value="mRNA"/>
</dbReference>
<dbReference type="EMBL" id="AK033375">
    <property type="protein sequence ID" value="BAC28253.1"/>
    <property type="molecule type" value="mRNA"/>
</dbReference>
<dbReference type="EMBL" id="AK085947">
    <property type="protein sequence ID" value="BAC39577.1"/>
    <property type="molecule type" value="mRNA"/>
</dbReference>
<dbReference type="EMBL" id="AK161548">
    <property type="protein sequence ID" value="BAE36456.1"/>
    <property type="molecule type" value="mRNA"/>
</dbReference>
<dbReference type="EMBL" id="BC006690">
    <property type="protein sequence ID" value="AAH06690.1"/>
    <property type="molecule type" value="mRNA"/>
</dbReference>
<dbReference type="EMBL" id="BC027312">
    <property type="protein sequence ID" value="AAH27312.1"/>
    <property type="molecule type" value="mRNA"/>
</dbReference>
<dbReference type="CCDS" id="CCDS23798.1">
    <molecule id="Q922Z0-1"/>
</dbReference>
<dbReference type="CCDS" id="CCDS87995.1">
    <molecule id="Q922Z0-2"/>
</dbReference>
<dbReference type="RefSeq" id="NP_001303645.1">
    <property type="nucleotide sequence ID" value="NM_001316716.1"/>
</dbReference>
<dbReference type="RefSeq" id="NP_001303646.1">
    <molecule id="Q922Z0-2"/>
    <property type="nucleotide sequence ID" value="NM_001316717.2"/>
</dbReference>
<dbReference type="RefSeq" id="NP_001303647.1">
    <property type="nucleotide sequence ID" value="NM_001316718.1"/>
</dbReference>
<dbReference type="RefSeq" id="NP_001303648.1">
    <property type="nucleotide sequence ID" value="NM_001316719.1"/>
</dbReference>
<dbReference type="RefSeq" id="NP_081718.2">
    <molecule id="Q922Z0-1"/>
    <property type="nucleotide sequence ID" value="NM_027442.5"/>
</dbReference>
<dbReference type="SMR" id="Q922Z0"/>
<dbReference type="FunCoup" id="Q922Z0">
    <property type="interactions" value="569"/>
</dbReference>
<dbReference type="STRING" id="10090.ENSMUSP00000019977"/>
<dbReference type="BindingDB" id="Q922Z0"/>
<dbReference type="ChEMBL" id="CHEMBL3616357"/>
<dbReference type="iPTMnet" id="Q922Z0"/>
<dbReference type="PhosphoSitePlus" id="Q922Z0"/>
<dbReference type="PaxDb" id="10090-ENSMUSP00000019977"/>
<dbReference type="ProteomicsDB" id="294084"/>
<dbReference type="ProteomicsDB" id="331193"/>
<dbReference type="Antibodypedia" id="32325">
    <property type="antibodies" value="223 antibodies from 24 providers"/>
</dbReference>
<dbReference type="Ensembl" id="ENSMUST00000019977.8">
    <molecule id="Q922Z0-1"/>
    <property type="protein sequence ID" value="ENSMUSP00000019977.8"/>
    <property type="gene ID" value="ENSMUSG00000063428.9"/>
</dbReference>
<dbReference type="Ensembl" id="ENSMUST00000216830.2">
    <molecule id="Q922Z0-2"/>
    <property type="protein sequence ID" value="ENSMUSP00000150979.2"/>
    <property type="gene ID" value="ENSMUSG00000063428.9"/>
</dbReference>
<dbReference type="GeneID" id="70503"/>
<dbReference type="KEGG" id="mmu:70503"/>
<dbReference type="UCSC" id="uc007exa.2">
    <molecule id="Q922Z0-1"/>
    <property type="organism name" value="mouse"/>
</dbReference>
<dbReference type="AGR" id="MGI:1925528"/>
<dbReference type="CTD" id="8528"/>
<dbReference type="MGI" id="MGI:1925528">
    <property type="gene designation" value="Ddo"/>
</dbReference>
<dbReference type="VEuPathDB" id="HostDB:ENSMUSG00000063428"/>
<dbReference type="eggNOG" id="KOG3923">
    <property type="taxonomic scope" value="Eukaryota"/>
</dbReference>
<dbReference type="GeneTree" id="ENSGT00390000018635"/>
<dbReference type="HOGENOM" id="CLU_034311_0_2_1"/>
<dbReference type="InParanoid" id="Q922Z0"/>
<dbReference type="OMA" id="DLWELQP"/>
<dbReference type="OrthoDB" id="2015447at2759"/>
<dbReference type="PhylomeDB" id="Q922Z0"/>
<dbReference type="TreeFam" id="TF313887"/>
<dbReference type="BRENDA" id="1.4.3.1">
    <property type="organism ID" value="3474"/>
</dbReference>
<dbReference type="Reactome" id="R-MMU-389661">
    <property type="pathway name" value="Glyoxylate metabolism and glycine degradation"/>
</dbReference>
<dbReference type="Reactome" id="R-MMU-9033241">
    <property type="pathway name" value="Peroxisomal protein import"/>
</dbReference>
<dbReference type="BioGRID-ORCS" id="70503">
    <property type="hits" value="3 hits in 76 CRISPR screens"/>
</dbReference>
<dbReference type="ChiTaRS" id="Ddo">
    <property type="organism name" value="mouse"/>
</dbReference>
<dbReference type="PRO" id="PR:Q922Z0"/>
<dbReference type="Proteomes" id="UP000000589">
    <property type="component" value="Chromosome 10"/>
</dbReference>
<dbReference type="RNAct" id="Q922Z0">
    <property type="molecule type" value="protein"/>
</dbReference>
<dbReference type="Bgee" id="ENSMUSG00000063428">
    <property type="expression patterns" value="Expressed in brain ependyma and 173 other cell types or tissues"/>
</dbReference>
<dbReference type="ExpressionAtlas" id="Q922Z0">
    <property type="expression patterns" value="baseline and differential"/>
</dbReference>
<dbReference type="GO" id="GO:0005829">
    <property type="term" value="C:cytosol"/>
    <property type="evidence" value="ECO:0007669"/>
    <property type="project" value="UniProtKB-SubCell"/>
</dbReference>
<dbReference type="GO" id="GO:0005782">
    <property type="term" value="C:peroxisomal matrix"/>
    <property type="evidence" value="ECO:0000250"/>
    <property type="project" value="UniProtKB"/>
</dbReference>
<dbReference type="GO" id="GO:0008445">
    <property type="term" value="F:D-aspartate oxidase activity"/>
    <property type="evidence" value="ECO:0000314"/>
    <property type="project" value="UniProtKB"/>
</dbReference>
<dbReference type="GO" id="GO:0047821">
    <property type="term" value="F:D-glutamate oxidase activity"/>
    <property type="evidence" value="ECO:0007669"/>
    <property type="project" value="RHEA"/>
</dbReference>
<dbReference type="GO" id="GO:0071949">
    <property type="term" value="F:FAD binding"/>
    <property type="evidence" value="ECO:0000314"/>
    <property type="project" value="UniProtKB"/>
</dbReference>
<dbReference type="GO" id="GO:0006531">
    <property type="term" value="P:aspartate metabolic process"/>
    <property type="evidence" value="ECO:0000315"/>
    <property type="project" value="MGI"/>
</dbReference>
<dbReference type="GO" id="GO:0019478">
    <property type="term" value="P:D-amino acid catabolic process"/>
    <property type="evidence" value="ECO:0000314"/>
    <property type="project" value="UniProtKB"/>
</dbReference>
<dbReference type="GO" id="GO:0007625">
    <property type="term" value="P:grooming behavior"/>
    <property type="evidence" value="ECO:0000315"/>
    <property type="project" value="MGI"/>
</dbReference>
<dbReference type="GO" id="GO:0042445">
    <property type="term" value="P:hormone metabolic process"/>
    <property type="evidence" value="ECO:0000315"/>
    <property type="project" value="MGI"/>
</dbReference>
<dbReference type="GO" id="GO:0007320">
    <property type="term" value="P:insemination"/>
    <property type="evidence" value="ECO:0000315"/>
    <property type="project" value="MGI"/>
</dbReference>
<dbReference type="GO" id="GO:0050877">
    <property type="term" value="P:nervous system process"/>
    <property type="evidence" value="ECO:0000315"/>
    <property type="project" value="UniProtKB"/>
</dbReference>
<dbReference type="GO" id="GO:0010646">
    <property type="term" value="P:regulation of cell communication"/>
    <property type="evidence" value="ECO:0000315"/>
    <property type="project" value="UniProtKB"/>
</dbReference>
<dbReference type="FunFam" id="3.40.50.720:FF:000551">
    <property type="entry name" value="D-aspartate oxidase"/>
    <property type="match status" value="1"/>
</dbReference>
<dbReference type="Gene3D" id="3.30.9.10">
    <property type="entry name" value="D-Amino Acid Oxidase, subunit A, domain 2"/>
    <property type="match status" value="1"/>
</dbReference>
<dbReference type="Gene3D" id="3.40.50.720">
    <property type="entry name" value="NAD(P)-binding Rossmann-like Domain"/>
    <property type="match status" value="1"/>
</dbReference>
<dbReference type="InterPro" id="IPR006181">
    <property type="entry name" value="D-amino_acid_oxidase_CS"/>
</dbReference>
<dbReference type="InterPro" id="IPR023209">
    <property type="entry name" value="DAO"/>
</dbReference>
<dbReference type="InterPro" id="IPR006076">
    <property type="entry name" value="FAD-dep_OxRdtase"/>
</dbReference>
<dbReference type="PANTHER" id="PTHR11530">
    <property type="entry name" value="D-AMINO ACID OXIDASE"/>
    <property type="match status" value="1"/>
</dbReference>
<dbReference type="PANTHER" id="PTHR11530:SF11">
    <property type="entry name" value="D-ASPARTATE OXIDASE"/>
    <property type="match status" value="1"/>
</dbReference>
<dbReference type="Pfam" id="PF01266">
    <property type="entry name" value="DAO"/>
    <property type="match status" value="1"/>
</dbReference>
<dbReference type="PIRSF" id="PIRSF000189">
    <property type="entry name" value="D-aa_oxidase"/>
    <property type="match status" value="1"/>
</dbReference>
<dbReference type="SUPFAM" id="SSF54373">
    <property type="entry name" value="FAD-linked reductases, C-terminal domain"/>
    <property type="match status" value="1"/>
</dbReference>
<dbReference type="SUPFAM" id="SSF51971">
    <property type="entry name" value="Nucleotide-binding domain"/>
    <property type="match status" value="1"/>
</dbReference>
<dbReference type="PROSITE" id="PS00677">
    <property type="entry name" value="DAO"/>
    <property type="match status" value="1"/>
</dbReference>
<organism>
    <name type="scientific">Mus musculus</name>
    <name type="common">Mouse</name>
    <dbReference type="NCBI Taxonomy" id="10090"/>
    <lineage>
        <taxon>Eukaryota</taxon>
        <taxon>Metazoa</taxon>
        <taxon>Chordata</taxon>
        <taxon>Craniata</taxon>
        <taxon>Vertebrata</taxon>
        <taxon>Euteleostomi</taxon>
        <taxon>Mammalia</taxon>
        <taxon>Eutheria</taxon>
        <taxon>Euarchontoglires</taxon>
        <taxon>Glires</taxon>
        <taxon>Rodentia</taxon>
        <taxon>Myomorpha</taxon>
        <taxon>Muroidea</taxon>
        <taxon>Muridae</taxon>
        <taxon>Murinae</taxon>
        <taxon>Mus</taxon>
        <taxon>Mus</taxon>
    </lineage>
</organism>
<evidence type="ECO:0000250" key="1">
    <source>
        <dbReference type="UniProtKB" id="D3ZDM7"/>
    </source>
</evidence>
<evidence type="ECO:0000250" key="2">
    <source>
        <dbReference type="UniProtKB" id="Q99489"/>
    </source>
</evidence>
<evidence type="ECO:0000255" key="3"/>
<evidence type="ECO:0000269" key="4">
    <source>
    </source>
</evidence>
<evidence type="ECO:0000269" key="5">
    <source>
    </source>
</evidence>
<evidence type="ECO:0000269" key="6">
    <source>
    </source>
</evidence>
<evidence type="ECO:0000269" key="7">
    <source>
    </source>
</evidence>
<evidence type="ECO:0000269" key="8">
    <source>
    </source>
</evidence>
<evidence type="ECO:0000269" key="9">
    <source>
    </source>
</evidence>
<evidence type="ECO:0000269" key="10">
    <source>
    </source>
</evidence>
<evidence type="ECO:0000269" key="11">
    <source>
    </source>
</evidence>
<evidence type="ECO:0000269" key="12">
    <source>
    </source>
</evidence>
<evidence type="ECO:0000269" key="13">
    <source>
    </source>
</evidence>
<evidence type="ECO:0000269" key="14">
    <source>
    </source>
</evidence>
<evidence type="ECO:0000269" key="15">
    <source>
    </source>
</evidence>
<evidence type="ECO:0000269" key="16">
    <source>
    </source>
</evidence>
<evidence type="ECO:0000269" key="17">
    <source>
    </source>
</evidence>
<evidence type="ECO:0000269" key="18">
    <source>
    </source>
</evidence>
<evidence type="ECO:0000269" key="19">
    <source>
    </source>
</evidence>
<evidence type="ECO:0000269" key="20">
    <source>
    </source>
</evidence>
<evidence type="ECO:0000269" key="21">
    <source>
    </source>
</evidence>
<evidence type="ECO:0000269" key="22">
    <source>
    </source>
</evidence>
<evidence type="ECO:0000269" key="23">
    <source>
    </source>
</evidence>
<evidence type="ECO:0000269" key="24">
    <source>
    </source>
</evidence>
<evidence type="ECO:0000269" key="25">
    <source>
    </source>
</evidence>
<evidence type="ECO:0000269" key="26">
    <source>
    </source>
</evidence>
<evidence type="ECO:0000269" key="27">
    <source>
    </source>
</evidence>
<evidence type="ECO:0000269" key="28">
    <source>
    </source>
</evidence>
<evidence type="ECO:0000303" key="29">
    <source>
    </source>
</evidence>
<evidence type="ECO:0000303" key="30">
    <source>
    </source>
</evidence>
<evidence type="ECO:0000303" key="31">
    <source>
    </source>
</evidence>
<evidence type="ECO:0000303" key="32">
    <source>
    </source>
</evidence>
<evidence type="ECO:0000305" key="33"/>
<evidence type="ECO:0000312" key="34">
    <source>
        <dbReference type="EMBL" id="BAF32940.1"/>
    </source>
</evidence>
<evidence type="ECO:0000312" key="35">
    <source>
        <dbReference type="EMBL" id="CAJ55686.1"/>
    </source>
</evidence>
<evidence type="ECO:0000312" key="36">
    <source>
        <dbReference type="Proteomes" id="UP000000589"/>
    </source>
</evidence>
<comment type="function">
    <text evidence="1 7 8 11 12 14 17 20 21 22 24 25 26 27">Selectively catalyzes the oxidative deamination of acidic amino acids (PubMed:17469229, PubMed:18235994, PubMed:20567862, PubMed:20603179, PubMed:25747990, PubMed:26058797, PubMed:26961959, PubMed:28393897, PubMed:29292239, PubMed:32185508, PubMed:32553892, PubMed:37189369). Suppresses the level of D-aspartate in the brain, an amino acid that can act as an agonist for glutamate receptors (PubMed:26961959, PubMed:32185508, PubMed:35915065). Protects the organism from the toxicity of D-amino acids (By similarity). May also function in the intestine (PubMed:35915065).</text>
</comment>
<comment type="function">
    <molecule>Isoform 1</molecule>
    <text evidence="4">Selectively catalyzes the oxidative deamination of acidic amino acids.</text>
</comment>
<comment type="function">
    <molecule>Isoform 2</molecule>
    <text evidence="4">Does not exhibit D-aspartate oxidase activity.</text>
</comment>
<comment type="catalytic activity">
    <molecule>Isoform 1</molecule>
    <reaction evidence="4 7 8 11 12 14 21 22 25">
        <text>D-aspartate + O2 + H2O = oxaloacetate + H2O2 + NH4(+)</text>
        <dbReference type="Rhea" id="RHEA:12512"/>
        <dbReference type="ChEBI" id="CHEBI:15377"/>
        <dbReference type="ChEBI" id="CHEBI:15379"/>
        <dbReference type="ChEBI" id="CHEBI:16240"/>
        <dbReference type="ChEBI" id="CHEBI:16452"/>
        <dbReference type="ChEBI" id="CHEBI:28938"/>
        <dbReference type="ChEBI" id="CHEBI:29990"/>
        <dbReference type="EC" id="1.4.3.1"/>
    </reaction>
    <physiologicalReaction direction="left-to-right" evidence="4 7 8 11 12 14 21 22 25">
        <dbReference type="Rhea" id="RHEA:12513"/>
    </physiologicalReaction>
</comment>
<comment type="catalytic activity">
    <reaction evidence="25">
        <text>D-glutamate + O2 + H2O = H2O2 + 2-oxoglutarate + NH4(+)</text>
        <dbReference type="Rhea" id="RHEA:10028"/>
        <dbReference type="ChEBI" id="CHEBI:15377"/>
        <dbReference type="ChEBI" id="CHEBI:15379"/>
        <dbReference type="ChEBI" id="CHEBI:16240"/>
        <dbReference type="ChEBI" id="CHEBI:16810"/>
        <dbReference type="ChEBI" id="CHEBI:28938"/>
        <dbReference type="ChEBI" id="CHEBI:29986"/>
    </reaction>
    <physiologicalReaction direction="left-to-right" evidence="25">
        <dbReference type="Rhea" id="RHEA:10029"/>
    </physiologicalReaction>
</comment>
<comment type="cofactor">
    <cofactor evidence="7 8 12 25">
        <name>FAD</name>
        <dbReference type="ChEBI" id="CHEBI:57692"/>
    </cofactor>
</comment>
<comment type="activity regulation">
    <text evidence="7 11 12 14 21 25">Inhibited by the benzodiazepine olanzapine; chronic systemic administration of the benzodiazepine increases levels of D-aspartate and L-glutamate in the prefrontal cortex (PubMed:28393897). Efficiently inhibited by 5-aminonicotinic acid (5-AN) and 1,4-Dihydropyrido[2,3-b]pyrazine-2,3-dione (DPPD) (PubMed:32553892). Inhibited by aminooxyacetic acid, thiolactomycin, anthranilic acid, malonate, meso-tartrate and L-tartrate (PubMed:17469229, PubMed:20567862, PubMed:20603179, PubMed:25747990). Benzoate has no effect on activity (PubMed:17469229, PubMed:20567862).</text>
</comment>
<comment type="biophysicochemical properties">
    <kinetics>
        <KM evidence="14">7.37 mM for D-aspartate (at 37 degrees Celsius and at pH 8.3)</KM>
        <KM evidence="8">4.87 mM for D-aspartate using GHS-tagged enzyme (at 37 degrees Celsius and at pH 8.3)</KM>
        <KM evidence="8">7.3 mM for D-aspartate using His-tagged enzyme (at 37 degrees Celsius and at pH 8.3)</KM>
        <KM evidence="11">8.85 mM for D-aspartate (at 37 degrees Celsius and at pH 8.3)</KM>
        <KM evidence="25">2.1 mM for D-aspartate (at 25 degrees Celsius and at pH 8.3)</KM>
        <KM evidence="8">6.59 mM for N-methyl D-aspartate using GHS-tagged enzyme (at 37 degrees Celsius and at pH 8.3)</KM>
        <KM evidence="8">8.02 mM for N-methyl D-aspartate using His-tagged enzyme (at 37 degrees Celsius and at pH 8.3)</KM>
        <KM evidence="11">9.73 mM for N-methyl D-aspartate (at 37 degrees Celsius and at pH 8.3)</KM>
        <KM evidence="25">4.2 mM for N-methyl D-aspartate (at 25 degrees Celsius and at pH 8.3)</KM>
        <KM evidence="11">79.4 mM for D-glutamate (at 37 degrees Celsius and at pH 8.3)</KM>
        <KM evidence="25">68.4 mM for D-glutamate (at 25 degrees Celsius and at pH 8.3)</KM>
        <KM evidence="25">101.4 mM for D-asparagine (at 25 degrees Celsius and at pH 8.3)</KM>
        <KM evidence="25">8.8 mM for D-histidine (at 25 degrees Celsius and at pH 8.3)</KM>
        <KM evidence="25">169 mM for D-proline (at 25 degrees Celsius and at pH 8.3)</KM>
        <text evidence="11 14 25">kcat is 9.83 sec(-1) with D-aspartate as substrate (at 37 degrees Celsius and at pH 8.3) (PubMed:25747990). kcat is 12.2 sec(-1) with D-aspartate as substrate (at 37 degrees Celsius and at pH 8.3) (PubMed:20567862). kcat is 58.4 sec(-1) with D-aspartate as substrate (at 25 degrees Celsius and at pH 8.3) (PubMed:32553892). kcat is 13 sec(-1) with N-methyl D-aspartate as substrate (at 37 degrees Celsius and at pH 8.3) (PubMed:20567862). kcat is 112.1 sec(-1) with N-methyl D-aspartate as substrate (at 25 degrees Celsius and at pH 8.3) (PubMed:32553892). kcat is 1.6 sec(-1) with D-glutamate as substrate (at 37 degrees Celsius and at pH 8.3) (PubMed:20567862). kcat is 16.8 sec(-1) with D-glutamate as substrate (at 25 degrees Celsius and at pH 8.3) (PubMed:32553892). kcat is 11.4 sec(-1) with D-asparagine as substrate (at 25 degrees Celsius and at pH 8.3) (PubMed:32553892). kcat is 0.71 sec(-1) with D-histidine as substrate (at 25 degrees Celsius and at pH 8.3) (PubMed:32553892). kcat is 5.5 sec(-1) with D-proline as substrate (at 25 degrees Celsius and at pH 8.3) (PubMed:32553892).</text>
    </kinetics>
    <phDependence>
        <text evidence="22">Optimum pH is 8.3-11.</text>
    </phDependence>
    <temperatureDependence>
        <text evidence="22">Optimum temperature is 45 degrees Celsius.</text>
    </temperatureDependence>
</comment>
<comment type="subunit">
    <text evidence="2 22 25">Dimer or tetramer (PubMed:29292239, PubMed:32553892). Interacts with PEX5; the interaction is direct and required for localization of DDO to the peroxisome (By similarity).</text>
</comment>
<comment type="subcellular location">
    <subcellularLocation>
        <location evidence="2">Peroxisome matrix</location>
    </subcellularLocation>
    <subcellularLocation>
        <location evidence="2">Cytoplasm</location>
        <location evidence="2">Cytosol</location>
    </subcellularLocation>
    <text evidence="2">Active in the peroxisomal matrix.</text>
</comment>
<comment type="alternative products">
    <event type="alternative splicing"/>
    <isoform>
        <id>Q922Z0-1</id>
        <name>1</name>
        <name evidence="29">Ddo1</name>
        <sequence type="displayed"/>
    </isoform>
    <isoform>
        <id>Q922Z0-2</id>
        <name>2</name>
        <name evidence="29">Ddo2</name>
        <sequence type="described" ref="VSP_062259"/>
    </isoform>
</comment>
<comment type="tissue specificity">
    <text evidence="18 20 26">Expressed in the small intestine (at protein level) (PubMed:35915065). Expressed in the ependymal cell layer of the telencephalic ventricles, hippocampus, thalamus, cerebellum, midbrain region, pons, olfactory bulbs, and cortex (PubMed:26961959). Repressed in the testis (PubMed:26658710).</text>
</comment>
<comment type="tissue specificity">
    <molecule>Isoform 1</molecule>
    <text evidence="4">Expressed in the kidney, liver, stomach, pancreas, uterus, lactating breast, involuting mammary gland, brain, heart, lung, and skin.</text>
</comment>
<comment type="tissue specificity">
    <molecule>Isoform 2</molecule>
    <text evidence="4">Expressed in kidney, liver, pancreas, and in the mammary gland regardless of lactation status.</text>
</comment>
<comment type="developmental stage">
    <text evidence="9 18 20 28">In the liver and kidney, progressively increases during postnatal stages (at protein level) (PubMed:26658710, PubMed:7903300). In the testis, expressed in Sertoli cells; expression progressively decreases during postnatal stages (at protein level) (PubMed:26658710). In the retina, expressed in horizontal cells from postnatal day 3.5-7.5 but not at postnatal day 12.5 (PubMed:18314103). Barely detectable in the developing brain at 15 dpc, and then progressively increases during postnatal stages (PubMed:26961959). Expressed in the ependymal cell layer of the telencephalic ventricles at 15 dpc, and additionally in the hippocampus, thalamus, and cerebellum at postnatal day 14 (PubMed:26961959).</text>
</comment>
<comment type="induction">
    <text evidence="13">Expression is not affected by chronic treatment with olanzapine or haloperidol.</text>
</comment>
<comment type="disruption phenotype">
    <text evidence="4 5 6 10 13 15 16 17 19 20 21 23">Knockout mice exhibit deficits in sensorimotor gating, motor coordination, a decline in fast glutamatergic transmission and a decay of hippocampal long-term potentiation; the effect on sensorimotor gating is enhanced following administration of the psychoactive drug phencyclidine (PCP) (PubMed:16725213, PubMed:20031274, PubMed:25771393). They also exhibit dysfunctional melanocortin-dependent behaviors, including diminished autogrooming, diminished sexual behavior, a failure to ejaculate, and an increase in body-weight (PubMed:16525061). Knockout animals exhibit a reduced occurrence of psychotomimetic behaviors following administration of phencyclidine (PubMed:25689573, PubMed:25979765). In the hippocampus, alters the morphology of the glutamatergic system (PubMed:25771393). Increases levels of extracellular D-aspartate and L-aspartate in the prefrontal cortex; levels of extracellular L-glutamate are unchanged (PubMed:26961959). In the hippocampus, increases the level of extracellular glutamine (PubMed:25771393). Increases the total level of D-aspartate in the brain, including in the prefrontal cortex, cerebral cortex, hippocampus, cerebellum, hypothalamus and medulla oblongata (PubMed:16516413, PubMed:16525061, PubMed:16725213, PubMed:20031274, PubMed:26058797, PubMed:26961959). Also increases the total level of D-aspartate in the lung, thymus, spleen, liver, spinal cord, kidney, muscle, heart, adrenal gland, pineal gland, pituitary gland, pancreas, ovaries, testis, plasma and urine (PubMed:16516413, PubMed:16525061, PubMed:16725213, PubMed:26058797). Abolishes olanzapine-mediated D-aspartate and L-glutamate release in the prefrontal cortex (PubMed:28393897). Alters the connectional profile of the hippocampus, resulting in stronger and more widespread peri-hippocampal and parietal-hippocampal connectivity in the knockout brain (PubMed:25689573). Leads to dystrophic microglia and cell death in cortical pyramidal neurons and dopaminergic neurons of the substantia nigra pars compacta, in the hippocampus, and in the prefrontal cortex (PubMed:25771393, PubMed:26961959, PubMed:30822420). Raises basal, but not restraint-induced, corticosterone concentrations (PubMed:16725213). Decreases expression of Homer1 isoform 5 in the prefrontal cortex; the effect is mitigated by administration of phencyclidine (PCP) (PubMed:25689573, PubMed:25979765). Increases expression of Homer1 isoform 1 in the striatum (PubMed:25979765). Decreases expression of Dlg4 in the striatum and in the cortex (PubMed:25979765). Decreases expression of Pomc protein in the pituitary intermediate lobe with a concominant decrease of melanocyte-stimulating hormone alpha (PubMed:16525061). In the mid-brain, increases the levels of glutamate N-methyl-D-aspartate receptor (NMDAR) subunits GluN1 and GluN2A while levels of GluN2B or AMPAR (alpha-amino-3-hydroxy-5-methyl-4-isoxazolepropionic acid receptor) subunit GluA1 are unchanged; dopaminergic cells exhibit enhanced NMDA receptor sensitivity (PubMed:26707656). Renders animals sensitive to high non-physiological level of D-aspartate and L-aspartate; administration of D-aspartate results in pronounced cell death of primary cortical neurons (PubMed:26961959). Alters cortical JNK signaling, Tau phosphorylation and increases protein SUMOylation (PubMed:30822420). Does not significantly affect the levels of D-glutamate or L-glutamate in the kidney or liver, or the level of L-aspartate in the prefrontal cortex (PubMed:26058797, PubMed:26961959). Does not significantly alter serum testosterone levels (PubMed:16525061). In the hippocampus, does not significantly alter the level of NMDAR or AMPAR subunits (PubMed:20031274).</text>
</comment>
<comment type="similarity">
    <text evidence="33">Belongs to the DAMOX/DASOX family.</text>
</comment>
<sequence length="341" mass="37546">MDTVCIAVVGAGVIGLSTAACISQLVPGCTVTVISDRFTPDTTSNVAAGMLIPHTCADTPVPTQKRWFRETFEHLSEIAKSAEAADAGVHLVSGWQIFRSVPAEEVPFWADVVLGFRKMTEAELKRFPQYVFGQAFTTLKCETSAYLPWLERRIKGSGGLLLTRRIEDLWELQPSFDIVVNCSGLGSRRLVGDPMISPVRGQVLQARAPWVKHFIRDGGGLTYVYPGMSYVTLGGTRQKGDWNRSPDAELSREIFSRCCTLEPSLHRAYDIKEKVGLRPSRPGVRLQKEILVRGQQTLPVVHNYGHGSGGISVHWGSALEATRLVMECIHTLRTPASLSKL</sequence>
<gene>
    <name type="primary">Ddo</name>
</gene>
<feature type="chain" id="PRO_0000162771" description="D-aspartate oxidase">
    <location>
        <begin position="1"/>
        <end position="341"/>
    </location>
</feature>
<feature type="short sequence motif" description="Microbody targeting signal" evidence="3">
    <location>
        <begin position="339"/>
        <end position="341"/>
    </location>
</feature>
<feature type="binding site" evidence="2">
    <location>
        <position position="36"/>
    </location>
    <ligand>
        <name>FAD</name>
        <dbReference type="ChEBI" id="CHEBI:57692"/>
    </ligand>
</feature>
<feature type="binding site" evidence="2">
    <location>
        <position position="37"/>
    </location>
    <ligand>
        <name>FAD</name>
        <dbReference type="ChEBI" id="CHEBI:57692"/>
    </ligand>
</feature>
<feature type="binding site" evidence="2">
    <location>
        <position position="43"/>
    </location>
    <ligand>
        <name>FAD</name>
        <dbReference type="ChEBI" id="CHEBI:57692"/>
    </ligand>
</feature>
<feature type="binding site" evidence="2">
    <location>
        <position position="44"/>
    </location>
    <ligand>
        <name>FAD</name>
        <dbReference type="ChEBI" id="CHEBI:57692"/>
    </ligand>
</feature>
<feature type="binding site" evidence="2">
    <location>
        <position position="50"/>
    </location>
    <ligand>
        <name>FAD</name>
        <dbReference type="ChEBI" id="CHEBI:57692"/>
    </ligand>
</feature>
<feature type="binding site" evidence="2">
    <location>
        <position position="307"/>
    </location>
    <ligand>
        <name>FAD</name>
        <dbReference type="ChEBI" id="CHEBI:57692"/>
    </ligand>
</feature>
<feature type="binding site" evidence="2">
    <location>
        <position position="311"/>
    </location>
    <ligand>
        <name>FAD</name>
        <dbReference type="ChEBI" id="CHEBI:57692"/>
    </ligand>
</feature>
<feature type="binding site" evidence="2">
    <location>
        <position position="312"/>
    </location>
    <ligand>
        <name>FAD</name>
        <dbReference type="ChEBI" id="CHEBI:57692"/>
    </ligand>
</feature>
<feature type="splice variant" id="VSP_062259" description="In isoform 2.">
    <original>IKGSGGLLLTRRIEDLWELQPSFDIVVNCSGLGSRRLVGDPMISPVRGQVLQARAPWVKHFIRDGGGLTYVYPGMSYVTLGGTRQKGDWNRSPDAELSREIFSRCCTLEPSLHRAYDIKEKVGLRPSRPGVRLQKEILVRGQQTLPVVHNYGHGSGGISVHWGSALEATRLVMECIHTLRTPASLSK</original>
    <variation>AIGL</variation>
    <location>
        <begin position="154"/>
        <end position="340"/>
    </location>
</feature>
<feature type="mutagenesis site" description="Abolishes catalytic activity." evidence="7">
    <original>R</original>
    <variation>A</variation>
    <variation>E</variation>
    <variation>M</variation>
    <location>
        <position position="216"/>
    </location>
</feature>
<feature type="mutagenesis site" description="Decreases catalytic activity. Alters substrate specificity; when associated with Y-237." evidence="7 11">
    <original>R</original>
    <variation>L</variation>
    <location>
        <position position="216"/>
    </location>
</feature>
<feature type="mutagenesis site" description="Resistance to thiolactomycin." evidence="12">
    <original>R</original>
    <variation>A</variation>
    <location>
        <position position="237"/>
    </location>
</feature>
<feature type="mutagenesis site" description="Decreases catalytic activity." evidence="7 11 12">
    <original>R</original>
    <variation>E</variation>
    <variation>A</variation>
    <variation>Y</variation>
    <location>
        <position position="237"/>
    </location>
</feature>
<feature type="mutagenesis site" description="Alters substrate specificity; when associated with L-216." evidence="11">
    <original>R</original>
    <variation>Y</variation>
    <location>
        <position position="237"/>
    </location>
</feature>
<feature type="mutagenesis site" description="Increases catalytic activity and FAD binding." evidence="8">
    <original>S</original>
    <variation>G</variation>
    <variation>A</variation>
    <location>
        <position position="308"/>
    </location>
</feature>
<feature type="mutagenesis site" description="Decreases catalytic activity and FAD binding." evidence="8">
    <original>S</original>
    <variation>Y</variation>
    <location>
        <position position="308"/>
    </location>
</feature>
<feature type="sequence conflict" description="In Ref. 5; AAH27312 and 2; BAF32940." evidence="33" ref="5 2">
    <original>C</original>
    <variation>Y</variation>
    <location>
        <position position="56"/>
    </location>
</feature>
<feature type="sequence conflict" description="In Ref. 5; AAH27312." evidence="33" ref="5">
    <original>W</original>
    <variation>C</variation>
    <location>
        <position position="67"/>
    </location>
</feature>
<feature type="sequence conflict" description="In Ref. 2; BAF32940." evidence="33" ref="2">
    <original>R</original>
    <variation>H</variation>
    <location>
        <position position="99"/>
    </location>
</feature>
<feature type="sequence conflict" description="In Ref. 2; BAF32940." evidence="33" ref="2">
    <original>R</original>
    <variation>W</variation>
    <location>
        <position position="164"/>
    </location>
</feature>
<reference evidence="35" key="1">
    <citation type="journal article" date="2006" name="Gene">
        <title>A physiological mechanism to regulate D-aspartic acid and NMDA levels in mammals revealed by D-aspartate oxidase deficient mice.</title>
        <authorList>
            <person name="Errico F."/>
            <person name="Pirro M.T."/>
            <person name="Affuso A."/>
            <person name="Spinelli P."/>
            <person name="De Felice M."/>
            <person name="D'Aniello A."/>
            <person name="Di Lauro R."/>
        </authorList>
    </citation>
    <scope>NUCLEOTIDE SEQUENCE [MRNA] (ISOFORM 2)</scope>
    <scope>FUNCTION (ISOFORMS 1 AND 2)</scope>
    <scope>CATALYTIC ACTIVITY (ISOFORM 1)</scope>
    <scope>TISSUE SPECIFICITY (ISOFORMS 1 AND 2)</scope>
    <scope>DISRUPTION PHENOTYPE</scope>
    <source>
        <strain evidence="35">C57BL/6J</strain>
        <tissue evidence="35">Kidney</tissue>
    </source>
</reference>
<reference evidence="34" key="2">
    <citation type="journal article" date="2007" name="Amino Acids">
        <title>Molecular cloning of a cDNA encoding mouse D-aspartate oxidase and functional characterization of its recombinant proteins by site-directed mutagenesis.</title>
        <authorList>
            <person name="Katane M."/>
            <person name="Furuchi T."/>
            <person name="Sekine M."/>
            <person name="Homma H."/>
        </authorList>
    </citation>
    <scope>NUCLEOTIDE SEQUENCE [MRNA]</scope>
    <scope>FUNCTION</scope>
    <scope>CATALYTIC ACTIVITY</scope>
    <scope>COFACTOR</scope>
    <scope>MUTAGENESIS OF ARG-216 AND ARG-237</scope>
    <source>
        <strain evidence="30">129/Sv</strain>
        <tissue evidence="34">Kidney</tissue>
    </source>
</reference>
<reference key="3">
    <citation type="journal article" date="2005" name="Science">
        <title>The transcriptional landscape of the mammalian genome.</title>
        <authorList>
            <person name="Carninci P."/>
            <person name="Kasukawa T."/>
            <person name="Katayama S."/>
            <person name="Gough J."/>
            <person name="Frith M.C."/>
            <person name="Maeda N."/>
            <person name="Oyama R."/>
            <person name="Ravasi T."/>
            <person name="Lenhard B."/>
            <person name="Wells C."/>
            <person name="Kodzius R."/>
            <person name="Shimokawa K."/>
            <person name="Bajic V.B."/>
            <person name="Brenner S.E."/>
            <person name="Batalov S."/>
            <person name="Forrest A.R."/>
            <person name="Zavolan M."/>
            <person name="Davis M.J."/>
            <person name="Wilming L.G."/>
            <person name="Aidinis V."/>
            <person name="Allen J.E."/>
            <person name="Ambesi-Impiombato A."/>
            <person name="Apweiler R."/>
            <person name="Aturaliya R.N."/>
            <person name="Bailey T.L."/>
            <person name="Bansal M."/>
            <person name="Baxter L."/>
            <person name="Beisel K.W."/>
            <person name="Bersano T."/>
            <person name="Bono H."/>
            <person name="Chalk A.M."/>
            <person name="Chiu K.P."/>
            <person name="Choudhary V."/>
            <person name="Christoffels A."/>
            <person name="Clutterbuck D.R."/>
            <person name="Crowe M.L."/>
            <person name="Dalla E."/>
            <person name="Dalrymple B.P."/>
            <person name="de Bono B."/>
            <person name="Della Gatta G."/>
            <person name="di Bernardo D."/>
            <person name="Down T."/>
            <person name="Engstrom P."/>
            <person name="Fagiolini M."/>
            <person name="Faulkner G."/>
            <person name="Fletcher C.F."/>
            <person name="Fukushima T."/>
            <person name="Furuno M."/>
            <person name="Futaki S."/>
            <person name="Gariboldi M."/>
            <person name="Georgii-Hemming P."/>
            <person name="Gingeras T.R."/>
            <person name="Gojobori T."/>
            <person name="Green R.E."/>
            <person name="Gustincich S."/>
            <person name="Harbers M."/>
            <person name="Hayashi Y."/>
            <person name="Hensch T.K."/>
            <person name="Hirokawa N."/>
            <person name="Hill D."/>
            <person name="Huminiecki L."/>
            <person name="Iacono M."/>
            <person name="Ikeo K."/>
            <person name="Iwama A."/>
            <person name="Ishikawa T."/>
            <person name="Jakt M."/>
            <person name="Kanapin A."/>
            <person name="Katoh M."/>
            <person name="Kawasawa Y."/>
            <person name="Kelso J."/>
            <person name="Kitamura H."/>
            <person name="Kitano H."/>
            <person name="Kollias G."/>
            <person name="Krishnan S.P."/>
            <person name="Kruger A."/>
            <person name="Kummerfeld S.K."/>
            <person name="Kurochkin I.V."/>
            <person name="Lareau L.F."/>
            <person name="Lazarevic D."/>
            <person name="Lipovich L."/>
            <person name="Liu J."/>
            <person name="Liuni S."/>
            <person name="McWilliam S."/>
            <person name="Madan Babu M."/>
            <person name="Madera M."/>
            <person name="Marchionni L."/>
            <person name="Matsuda H."/>
            <person name="Matsuzawa S."/>
            <person name="Miki H."/>
            <person name="Mignone F."/>
            <person name="Miyake S."/>
            <person name="Morris K."/>
            <person name="Mottagui-Tabar S."/>
            <person name="Mulder N."/>
            <person name="Nakano N."/>
            <person name="Nakauchi H."/>
            <person name="Ng P."/>
            <person name="Nilsson R."/>
            <person name="Nishiguchi S."/>
            <person name="Nishikawa S."/>
            <person name="Nori F."/>
            <person name="Ohara O."/>
            <person name="Okazaki Y."/>
            <person name="Orlando V."/>
            <person name="Pang K.C."/>
            <person name="Pavan W.J."/>
            <person name="Pavesi G."/>
            <person name="Pesole G."/>
            <person name="Petrovsky N."/>
            <person name="Piazza S."/>
            <person name="Reed J."/>
            <person name="Reid J.F."/>
            <person name="Ring B.Z."/>
            <person name="Ringwald M."/>
            <person name="Rost B."/>
            <person name="Ruan Y."/>
            <person name="Salzberg S.L."/>
            <person name="Sandelin A."/>
            <person name="Schneider C."/>
            <person name="Schoenbach C."/>
            <person name="Sekiguchi K."/>
            <person name="Semple C.A."/>
            <person name="Seno S."/>
            <person name="Sessa L."/>
            <person name="Sheng Y."/>
            <person name="Shibata Y."/>
            <person name="Shimada H."/>
            <person name="Shimada K."/>
            <person name="Silva D."/>
            <person name="Sinclair B."/>
            <person name="Sperling S."/>
            <person name="Stupka E."/>
            <person name="Sugiura K."/>
            <person name="Sultana R."/>
            <person name="Takenaka Y."/>
            <person name="Taki K."/>
            <person name="Tammoja K."/>
            <person name="Tan S.L."/>
            <person name="Tang S."/>
            <person name="Taylor M.S."/>
            <person name="Tegner J."/>
            <person name="Teichmann S.A."/>
            <person name="Ueda H.R."/>
            <person name="van Nimwegen E."/>
            <person name="Verardo R."/>
            <person name="Wei C.L."/>
            <person name="Yagi K."/>
            <person name="Yamanishi H."/>
            <person name="Zabarovsky E."/>
            <person name="Zhu S."/>
            <person name="Zimmer A."/>
            <person name="Hide W."/>
            <person name="Bult C."/>
            <person name="Grimmond S.M."/>
            <person name="Teasdale R.D."/>
            <person name="Liu E.T."/>
            <person name="Brusic V."/>
            <person name="Quackenbush J."/>
            <person name="Wahlestedt C."/>
            <person name="Mattick J.S."/>
            <person name="Hume D.A."/>
            <person name="Kai C."/>
            <person name="Sasaki D."/>
            <person name="Tomaru Y."/>
            <person name="Fukuda S."/>
            <person name="Kanamori-Katayama M."/>
            <person name="Suzuki M."/>
            <person name="Aoki J."/>
            <person name="Arakawa T."/>
            <person name="Iida J."/>
            <person name="Imamura K."/>
            <person name="Itoh M."/>
            <person name="Kato T."/>
            <person name="Kawaji H."/>
            <person name="Kawagashira N."/>
            <person name="Kawashima T."/>
            <person name="Kojima M."/>
            <person name="Kondo S."/>
            <person name="Konno H."/>
            <person name="Nakano K."/>
            <person name="Ninomiya N."/>
            <person name="Nishio T."/>
            <person name="Okada M."/>
            <person name="Plessy C."/>
            <person name="Shibata K."/>
            <person name="Shiraki T."/>
            <person name="Suzuki S."/>
            <person name="Tagami M."/>
            <person name="Waki K."/>
            <person name="Watahiki A."/>
            <person name="Okamura-Oho Y."/>
            <person name="Suzuki H."/>
            <person name="Kawai J."/>
            <person name="Hayashizaki Y."/>
        </authorList>
    </citation>
    <scope>NUCLEOTIDE SEQUENCE [LARGE SCALE MRNA]</scope>
    <source>
        <strain>C57BL/6J</strain>
        <tissue>Heart</tissue>
        <tissue>Lung</tissue>
        <tissue>Pituitary</tissue>
    </source>
</reference>
<reference evidence="36" key="4">
    <citation type="journal article" date="2009" name="PLoS Biol.">
        <title>Lineage-specific biology revealed by a finished genome assembly of the mouse.</title>
        <authorList>
            <person name="Church D.M."/>
            <person name="Goodstadt L."/>
            <person name="Hillier L.W."/>
            <person name="Zody M.C."/>
            <person name="Goldstein S."/>
            <person name="She X."/>
            <person name="Bult C.J."/>
            <person name="Agarwala R."/>
            <person name="Cherry J.L."/>
            <person name="DiCuccio M."/>
            <person name="Hlavina W."/>
            <person name="Kapustin Y."/>
            <person name="Meric P."/>
            <person name="Maglott D."/>
            <person name="Birtle Z."/>
            <person name="Marques A.C."/>
            <person name="Graves T."/>
            <person name="Zhou S."/>
            <person name="Teague B."/>
            <person name="Potamousis K."/>
            <person name="Churas C."/>
            <person name="Place M."/>
            <person name="Herschleb J."/>
            <person name="Runnheim R."/>
            <person name="Forrest D."/>
            <person name="Amos-Landgraf J."/>
            <person name="Schwartz D.C."/>
            <person name="Cheng Z."/>
            <person name="Lindblad-Toh K."/>
            <person name="Eichler E.E."/>
            <person name="Ponting C.P."/>
        </authorList>
    </citation>
    <scope>NUCLEOTIDE SEQUENCE [LARGE SCALE GENOMIC DNA]</scope>
    <source>
        <strain evidence="36">C57BL/6J</strain>
    </source>
</reference>
<reference key="5">
    <citation type="journal article" date="2004" name="Genome Res.">
        <title>The status, quality, and expansion of the NIH full-length cDNA project: the Mammalian Gene Collection (MGC).</title>
        <authorList>
            <consortium name="The MGC Project Team"/>
        </authorList>
    </citation>
    <scope>NUCLEOTIDE SEQUENCE [LARGE SCALE MRNA]</scope>
    <source>
        <strain>Czech II</strain>
        <strain>FVB/N</strain>
        <tissue>Mammary tumor</tissue>
    </source>
</reference>
<reference key="6">
    <citation type="journal article" date="1993" name="J. Biol. Chem.">
        <title>Biological role of D-amino acid oxidase and D-aspartate oxidase. Effects of D-amino acids.</title>
        <authorList>
            <person name="D'Aniello A."/>
            <person name="D'Onofrio G."/>
            <person name="Pischetola M."/>
            <person name="D'Aniello G."/>
            <person name="Vetere A."/>
            <person name="Petrucelli L."/>
            <person name="Fisher G.H."/>
        </authorList>
    </citation>
    <scope>DEVELOPMENTAL STAGE</scope>
</reference>
<reference key="7">
    <citation type="journal article" date="2006" name="Behav. Brain Res.">
        <title>Behavioural alterations in male mice lacking the gene for D-aspartate oxidase.</title>
        <authorList>
            <person name="Weil Z.M."/>
            <person name="Huang A.S."/>
            <person name="Beigneux A."/>
            <person name="Kim P.M."/>
            <person name="Molliver M.E."/>
            <person name="Blackshaw S."/>
            <person name="Young S.G."/>
            <person name="Nelson R.J."/>
            <person name="Snyder S.H."/>
        </authorList>
    </citation>
    <scope>DISRUPTION PHENOTYPE</scope>
</reference>
<reference key="8">
    <citation type="journal article" date="2006" name="J. Neurosci.">
        <title>D-aspartate regulates melano in formation and function: behavioral alterations in D-aspartate oxidase-deficient mice.</title>
        <authorList>
            <person name="Huang A.S."/>
            <person name="Beigneux A."/>
            <person name="Weil Z.M."/>
            <person name="Kim P.M."/>
            <person name="Molliver M.E."/>
            <person name="Blackshaw S."/>
            <person name="Nelson R.J."/>
            <person name="Young S.G."/>
            <person name="Snyder S.H."/>
        </authorList>
    </citation>
    <scope>DISRUPTION PHENOTYPE</scope>
</reference>
<reference key="9">
    <citation type="journal article" date="2008" name="Amino Acids">
        <title>Hyperactive mutants of mouse D-aspartate oxidase: mutagenesis of the active site residue serine 308.</title>
        <authorList>
            <person name="Katane M."/>
            <person name="Hanai T."/>
            <person name="Furuchi T."/>
            <person name="Sekine M."/>
            <person name="Homma H."/>
        </authorList>
    </citation>
    <scope>FUNCTION</scope>
    <scope>CATALYTIC ACTIVITY</scope>
    <scope>COFACTOR</scope>
    <scope>BIOPHYSICOCHEMICAL PROPERTIES</scope>
    <scope>MUTAGENESIS OF SER-308</scope>
</reference>
<reference key="10">
    <citation type="journal article" date="2008" name="Exp. Eye Res.">
        <title>D-Aspartate and D-aspartate oxidase show selective and developmentally dynamic localization in mouse retina.</title>
        <authorList>
            <person name="Huang A.S."/>
            <person name="Lee D.A."/>
            <person name="Blackshaw S."/>
        </authorList>
    </citation>
    <scope>DEVELOPMENTAL STAGE</scope>
</reference>
<reference key="11">
    <citation type="journal article" date="2010" name="Biochimie">
        <title>Thiolactomycin inhibits D-aspartate oxidase: a novel approach to probing the active site environment.</title>
        <authorList>
            <person name="Katane M."/>
            <person name="Saitoh Y."/>
            <person name="Hanai T."/>
            <person name="Sekine M."/>
            <person name="Furuchi T."/>
            <person name="Koyama N."/>
            <person name="Nakagome I."/>
            <person name="Tomoda H."/>
            <person name="Hirono S."/>
            <person name="Homma H."/>
        </authorList>
    </citation>
    <scope>FUNCTION</scope>
    <scope>CATALYTIC ACTIVITY</scope>
    <scope>COFACTOR</scope>
    <scope>ACTIVITY REGULATION</scope>
    <scope>MUTAGENESIS OF ARG-237</scope>
</reference>
<reference key="12">
    <citation type="journal article" date="2010" name="Cell">
        <title>A tissue-specific atlas of mouse protein phosphorylation and expression.</title>
        <authorList>
            <person name="Huttlin E.L."/>
            <person name="Jedrychowski M.P."/>
            <person name="Elias J.E."/>
            <person name="Goswami T."/>
            <person name="Rad R."/>
            <person name="Beausoleil S.A."/>
            <person name="Villen J."/>
            <person name="Haas W."/>
            <person name="Sowa M.E."/>
            <person name="Gygi S.P."/>
        </authorList>
    </citation>
    <scope>IDENTIFICATION BY MASS SPECTROMETRY [LARGE SCALE ANALYSIS]</scope>
    <source>
        <tissue>Heart</tissue>
        <tissue>Kidney</tissue>
    </source>
</reference>
<reference key="13">
    <citation type="journal article" date="2011" name="Amino Acids">
        <title>Role of the active site residues arginine-216 and arginine-237 in the substrate specificity of mammalian D-aspartate oxidase.</title>
        <authorList>
            <person name="Katane M."/>
            <person name="Saitoh Y."/>
            <person name="Maeda K."/>
            <person name="Hanai T."/>
            <person name="Sekine M."/>
            <person name="Furuchi T."/>
            <person name="Homma H."/>
        </authorList>
    </citation>
    <scope>FUNCTION</scope>
    <scope>CATALYTIC ACTIVITY</scope>
    <scope>ACTIVITY REGULATION</scope>
    <scope>BIOPHYSICOCHEMICAL PROPERTIES</scope>
    <scope>MUTAGENESIS OF ARG-216 AND ARG-237</scope>
</reference>
<reference key="14">
    <citation type="journal article" date="2011" name="Neurobiol. Aging">
        <title>Persistent increase of D-aspartate in D-aspartate oxidase mutant mice induces a precocious hippocampal age-dependent synaptic plasticity and spatial memory decay.</title>
        <authorList>
            <person name="Errico F."/>
            <person name="Nistico R."/>
            <person name="Napolitano F."/>
            <person name="Oliva A.B."/>
            <person name="Romano R."/>
            <person name="Barbieri F."/>
            <person name="Florio T."/>
            <person name="Russo C."/>
            <person name="Mercuri N.B."/>
            <person name="Usiello A."/>
        </authorList>
    </citation>
    <scope>DISRUPTION PHENOTYPE</scope>
</reference>
<reference key="15">
    <citation type="journal article" date="2015" name="Biol. Pharm. Bull.">
        <title>Characterization of the enzymatic and structural properties of human D-aspartate oxidase and comparison with those of the rat and mouse enzymes.</title>
        <authorList>
            <person name="Katane M."/>
            <person name="Kawata T."/>
            <person name="Nakayama K."/>
            <person name="Saitoh Y."/>
            <person name="Kaneko Y."/>
            <person name="Matsuda S."/>
            <person name="Saitoh Y."/>
            <person name="Miyamoto T."/>
            <person name="Sekine M."/>
            <person name="Homma H."/>
        </authorList>
    </citation>
    <scope>FUNCTION</scope>
    <scope>CATALYTIC ACTIVITY</scope>
    <scope>ACTIVITY REGULATION</scope>
    <scope>BIOPHYSICOCHEMICAL PROPERTIES</scope>
</reference>
<reference key="16">
    <citation type="journal article" date="2015" name="J. Pharm. Biomed. Anal.">
        <title>Changes in D-aspartic acid and D-glutamic acid levels in the tissues and physiological fluids of mice with various D-aspartate oxidase activities.</title>
        <authorList>
            <person name="Han H."/>
            <person name="Miyoshi Y."/>
            <person name="Koga R."/>
            <person name="Mita M."/>
            <person name="Konno R."/>
            <person name="Hamase K."/>
        </authorList>
    </citation>
    <scope>FUNCTION</scope>
    <scope>DISRUPTION PHENOTYPE</scope>
</reference>
<reference key="17">
    <citation type="journal article" date="2015" name="Neurobiol. Aging">
        <title>d-Aspartate oxidase influences glutamatergic system homeostasis in mammalian brain.</title>
        <authorList>
            <person name="Cristino L."/>
            <person name="Luongo L."/>
            <person name="Squillace M."/>
            <person name="Paolone G."/>
            <person name="Mango D."/>
            <person name="Piccinin S."/>
            <person name="Zianni E."/>
            <person name="Imperatore R."/>
            <person name="Iannotta M."/>
            <person name="Longo F."/>
            <person name="Errico F."/>
            <person name="Vescovi A.L."/>
            <person name="Morari M."/>
            <person name="Maione S."/>
            <person name="Gardoni F."/>
            <person name="Nistico R."/>
            <person name="Usiello A."/>
        </authorList>
    </citation>
    <scope>DISRUPTION PHENOTYPE</scope>
</reference>
<reference key="18">
    <citation type="journal article" date="2015" name="Prog. Neuro-Psychopharmacol. Biol. Psychiatry">
        <title>D-aspartate dysregulation in Ddo(-/-) mice modulates phencyclidine-induced gene expression changes of postsynaptic density molecules in cortex and striatum.</title>
        <authorList>
            <person name="de Bartolomeis A."/>
            <person name="Errico F."/>
            <person name="Aceto G."/>
            <person name="Tomasetti C."/>
            <person name="Usiello A."/>
            <person name="Iasevoli F."/>
        </authorList>
    </citation>
    <scope>DISRUPTION PHENOTYPE</scope>
</reference>
<reference key="19">
    <citation type="journal article" date="2015" name="Transl. Psychiatry">
        <title>A role for D-aspartate oxidase in schizophrenia and in schizophrenia-related symptoms induced by phencyclidine in mice.</title>
        <authorList>
            <person name="Errico F."/>
            <person name="D'Argenio V."/>
            <person name="Sforazzini F."/>
            <person name="Iasevoli F."/>
            <person name="Squillace M."/>
            <person name="Guerri G."/>
            <person name="Napolitano F."/>
            <person name="Angrisano T."/>
            <person name="Di Maio A."/>
            <person name="Keller S."/>
            <person name="Vitucci D."/>
            <person name="Galbusera A."/>
            <person name="Chiariotti L."/>
            <person name="Bertolino A."/>
            <person name="de Bartolomeis A."/>
            <person name="Salvatore F."/>
            <person name="Gozzi A."/>
            <person name="Usiello A."/>
        </authorList>
    </citation>
    <scope>INDUCTION</scope>
    <scope>DISRUPTION PHENOTYPE</scope>
</reference>
<reference key="20">
    <citation type="journal article" date="2016" name="Biol. Reprod.">
        <title>The Effect of D-Aspartate on Spermatogenesis in Mouse Testis.</title>
        <authorList>
            <person name="Tomita K."/>
            <person name="Tanaka H."/>
            <person name="Kageyama S."/>
            <person name="Nagasawa M."/>
            <person name="Wada A."/>
            <person name="Murai R."/>
            <person name="Kobayashi K."/>
            <person name="Hanada E."/>
            <person name="Agata Y."/>
            <person name="Kawauchi A."/>
        </authorList>
    </citation>
    <scope>TISSUE SPECIFICITY</scope>
    <scope>DEVELOPMENTAL STAGE</scope>
</reference>
<reference key="21">
    <citation type="journal article" date="2016" name="J. Neurosci.">
        <title>Age-Related Changes in D-Aspartate Oxidase Promoter Methylation Control Extracellular D-Aspartate Levels and Prevent Precocious Cell Death during Brain Aging.</title>
        <authorList>
            <person name="Punzo D."/>
            <person name="Errico F."/>
            <person name="Cristino L."/>
            <person name="Sacchi S."/>
            <person name="Keller S."/>
            <person name="Belardo C."/>
            <person name="Luongo L."/>
            <person name="Nuzzo T."/>
            <person name="Imperatore R."/>
            <person name="Florio E."/>
            <person name="De Novellis V."/>
            <person name="Affinito O."/>
            <person name="Migliarini S."/>
            <person name="Maddaloni G."/>
            <person name="Sisalli M.J."/>
            <person name="Pasqualetti M."/>
            <person name="Pollegioni L."/>
            <person name="Maione S."/>
            <person name="Chiariotti L."/>
            <person name="Usiello A."/>
        </authorList>
    </citation>
    <scope>FUNCTION</scope>
    <scope>TISSUE SPECIFICITY</scope>
    <scope>DEVELOPMENTAL STAGE</scope>
    <scope>DISRUPTION PHENOTYPE</scope>
</reference>
<reference key="22">
    <citation type="journal article" date="2016" name="Neuropharmacology">
        <title>Persistent elevation of D-Aspartate enhances NMDA receptor-mediated responses in mouse substantia nigra pars compacta dopamine neurons.</title>
        <authorList>
            <person name="Krashia P."/>
            <person name="Ledonne A."/>
            <person name="Nobili A."/>
            <person name="Cordella A."/>
            <person name="Errico F."/>
            <person name="Usiello A."/>
            <person name="D'Amelio M."/>
            <person name="Mercuri N.B."/>
            <person name="Guatteo E."/>
            <person name="Carunchio I."/>
        </authorList>
    </citation>
    <scope>DISRUPTION PHENOTYPE</scope>
</reference>
<reference key="23">
    <citation type="journal article" date="2017" name="Sci. Rep.">
        <title>Olanzapine, but not clozapine, increases glutamate release in the prefrontal cortex of freely moving mice by inhibiting D-aspartate oxidase activity.</title>
        <authorList>
            <person name="Sacchi S."/>
            <person name="Novellis V."/>
            <person name="Paolone G."/>
            <person name="Nuzzo T."/>
            <person name="Iannotta M."/>
            <person name="Belardo C."/>
            <person name="Squillace M."/>
            <person name="Bolognesi P."/>
            <person name="Rosini E."/>
            <person name="Motta Z."/>
            <person name="Frassineti M."/>
            <person name="Bertolino A."/>
            <person name="Pollegioni L."/>
            <person name="Morari M."/>
            <person name="Maione S."/>
            <person name="Errico F."/>
            <person name="Usiello A."/>
        </authorList>
    </citation>
    <scope>FUNCTION</scope>
    <scope>CATALYTIC ACTIVITY</scope>
    <scope>ACTIVITY REGULATION</scope>
    <scope>DISRUPTION PHENOTYPE</scope>
</reference>
<reference key="24">
    <citation type="journal article" date="2018" name="Biochim. Biophys. Acta">
        <title>Rat d-aspartate oxidase is more similar to the human enzyme than the mouse enzyme.</title>
        <authorList>
            <person name="Katane M."/>
            <person name="Kuwabara H."/>
            <person name="Nakayama K."/>
            <person name="Saitoh Y."/>
            <person name="Miyamoto T."/>
            <person name="Sekine M."/>
            <person name="Homma H."/>
        </authorList>
    </citation>
    <scope>FUNCTION</scope>
    <scope>CATALYTIC ACTIVITY</scope>
    <scope>BIOPHYSICOCHEMICAL PROPERTIES</scope>
    <scope>SUBUNIT</scope>
</reference>
<reference key="25">
    <citation type="journal article" date="2019" name="Exp. Neurol.">
        <title>Free d-aspartate triggers NMDA receptor-dependent cell death in primary cortical neurons and perturbs JNK activation, Tau phosphorylation, and protein SUMOylation in the cerebral cortex of mice lacking d-aspartate oxidase activity.</title>
        <authorList>
            <person name="Nuzzo T."/>
            <person name="Feligioni M."/>
            <person name="Cristino L."/>
            <person name="Pagano I."/>
            <person name="Marcelli S."/>
            <person name="Iannuzzi F."/>
            <person name="Imperatore R."/>
            <person name="D'Angelo L."/>
            <person name="Petrella C."/>
            <person name="Carella M."/>
            <person name="Pollegioni L."/>
            <person name="Sacchi S."/>
            <person name="Punzo D."/>
            <person name="De Girolamo P."/>
            <person name="Errico F."/>
            <person name="Canu N."/>
            <person name="Usiello A."/>
        </authorList>
    </citation>
    <scope>DISRUPTION PHENOTYPE</scope>
</reference>
<reference key="26">
    <citation type="journal article" date="2020" name="Amino Acids">
        <title>Prenatal expression of D-aspartate oxidase causes early cerebral D-aspartate depletion and influences brain morphology and cognitive functions at adulthood.</title>
        <authorList>
            <person name="De Rosa A."/>
            <person name="Mastrostefano F."/>
            <person name="Di Maio A."/>
            <person name="Nuzzo T."/>
            <person name="Saitoh Y."/>
            <person name="Katane M."/>
            <person name="Isidori A.M."/>
            <person name="Caputo V."/>
            <person name="Marotta P."/>
            <person name="Falco G."/>
            <person name="De Stefano M.E."/>
            <person name="Homma H."/>
            <person name="Usiello A."/>
            <person name="Errico F."/>
        </authorList>
    </citation>
    <scope>FUNCTION</scope>
</reference>
<reference key="27">
    <citation type="journal article" date="2020" name="Biochim. Biophys. Acta">
        <title>Biochemical characterization of mouse d-aspartate oxidase.</title>
        <authorList>
            <person name="Puggioni V."/>
            <person name="Savinelli A."/>
            <person name="Miceli M."/>
            <person name="Molla G."/>
            <person name="Pollegioni L."/>
            <person name="Sacchi S."/>
        </authorList>
    </citation>
    <scope>FUNCTION</scope>
    <scope>CATALYTIC ACTIVITY</scope>
    <scope>COFACTOR</scope>
    <scope>ACTIVITY REGULATION</scope>
    <scope>BIOPHYSICOCHEMICAL PROPERTIES</scope>
    <scope>SUBUNIT</scope>
    <source>
        <strain evidence="32">129/Sv</strain>
    </source>
</reference>
<reference key="28">
    <citation type="journal article" date="2022" name="Transl. Psychiatry">
        <title>D-aspartate oxidase gene duplication induces social recognition memory deficit in mice and intellectual disabilities in humans.</title>
        <authorList>
            <person name="Lombardo B."/>
            <person name="Pagani M."/>
            <person name="De Rosa A."/>
            <person name="Nunziato M."/>
            <person name="Migliarini S."/>
            <person name="Garofalo M."/>
            <person name="Terrile M."/>
            <person name="D'Argenio V."/>
            <person name="Galbusera A."/>
            <person name="Nuzzo T."/>
            <person name="Ranieri A."/>
            <person name="Vitale A."/>
            <person name="Leggiero E."/>
            <person name="Di Maio A."/>
            <person name="Barsotti N."/>
            <person name="Borello U."/>
            <person name="Napolitano F."/>
            <person name="Mandarino A."/>
            <person name="Carotenuto M."/>
            <person name="Heresco-Levy U."/>
            <person name="Pasqualetti M."/>
            <person name="Malatesta P."/>
            <person name="Gozzi A."/>
            <person name="Errico F."/>
            <person name="Salvatore F."/>
            <person name="Pastore L."/>
            <person name="Usiello A."/>
        </authorList>
    </citation>
    <scope>FUNCTION</scope>
    <scope>TISSUE SPECIFICITY</scope>
</reference>
<reference key="29">
    <citation type="journal article" date="2023" name="Biomolecules">
        <title>D-Aspartate Depletion Perturbs Steroidogenesis and Spermatogenesis in Mice.</title>
        <authorList>
            <person name="Santillo A."/>
            <person name="Falvo S."/>
            <person name="Venditti M."/>
            <person name="Di Maio A."/>
            <person name="Chieffi Baccari G."/>
            <person name="Errico F."/>
            <person name="Usiello A."/>
            <person name="Minucci S."/>
            <person name="Di Fiore M.M."/>
        </authorList>
    </citation>
    <scope>FUNCTION</scope>
</reference>
<name>OXDD_MOUSE</name>